<evidence type="ECO:0000250" key="1"/>
<evidence type="ECO:0000250" key="2">
    <source>
        <dbReference type="UniProtKB" id="Q8CGS5"/>
    </source>
</evidence>
<evidence type="ECO:0000250" key="3">
    <source>
        <dbReference type="UniProtKB" id="Q9BQ52"/>
    </source>
</evidence>
<evidence type="ECO:0000255" key="4"/>
<evidence type="ECO:0000256" key="5">
    <source>
        <dbReference type="SAM" id="MobiDB-lite"/>
    </source>
</evidence>
<evidence type="ECO:0000303" key="6">
    <source>
    </source>
</evidence>
<evidence type="ECO:0000305" key="7"/>
<evidence type="ECO:0007744" key="8">
    <source>
    </source>
</evidence>
<evidence type="ECO:0007744" key="9">
    <source>
    </source>
</evidence>
<evidence type="ECO:0007744" key="10">
    <source>
    </source>
</evidence>
<evidence type="ECO:0007744" key="11">
    <source>
    </source>
</evidence>
<keyword id="KW-0025">Alternative splicing</keyword>
<keyword id="KW-0255">Endonuclease</keyword>
<keyword id="KW-0378">Hydrolase</keyword>
<keyword id="KW-0479">Metal-binding</keyword>
<keyword id="KW-0496">Mitochondrion</keyword>
<keyword id="KW-1135">Mitochondrion nucleoid</keyword>
<keyword id="KW-0540">Nuclease</keyword>
<keyword id="KW-0539">Nucleus</keyword>
<keyword id="KW-0597">Phosphoprotein</keyword>
<keyword id="KW-1185">Reference proteome</keyword>
<keyword id="KW-0809">Transit peptide</keyword>
<keyword id="KW-0819">tRNA processing</keyword>
<keyword id="KW-0862">Zinc</keyword>
<proteinExistence type="evidence at protein level"/>
<feature type="transit peptide" description="Mitochondrion" evidence="4">
    <location>
        <begin position="1"/>
        <end position="16"/>
    </location>
</feature>
<feature type="chain" id="PRO_0000155830" description="Zinc phosphodiesterase ELAC protein 2">
    <location>
        <begin position="17"/>
        <end position="831"/>
    </location>
</feature>
<feature type="region of interest" description="Disordered" evidence="5">
    <location>
        <begin position="15"/>
        <end position="47"/>
    </location>
</feature>
<feature type="region of interest" description="Disordered" evidence="5">
    <location>
        <begin position="179"/>
        <end position="227"/>
    </location>
</feature>
<feature type="region of interest" description="Disordered" evidence="5">
    <location>
        <begin position="791"/>
        <end position="831"/>
    </location>
</feature>
<feature type="compositionally biased region" description="Polar residues" evidence="5">
    <location>
        <begin position="186"/>
        <end position="212"/>
    </location>
</feature>
<feature type="compositionally biased region" description="Basic and acidic residues" evidence="5">
    <location>
        <begin position="798"/>
        <end position="822"/>
    </location>
</feature>
<feature type="modified residue" description="Phosphoserine" evidence="10">
    <location>
        <position position="191"/>
    </location>
</feature>
<feature type="modified residue" description="Phosphoserine" evidence="10">
    <location>
        <position position="195"/>
    </location>
</feature>
<feature type="modified residue" description="Phosphoserine" evidence="10">
    <location>
        <position position="200"/>
    </location>
</feature>
<feature type="modified residue" description="Phosphoserine" evidence="3">
    <location>
        <position position="204"/>
    </location>
</feature>
<feature type="modified residue" description="Phosphoserine" evidence="3">
    <location>
        <position position="732"/>
    </location>
</feature>
<feature type="modified residue" description="Phosphothreonine" evidence="9">
    <location>
        <position position="792"/>
    </location>
</feature>
<feature type="modified residue" description="Phosphoserine" evidence="8 11">
    <location>
        <position position="797"/>
    </location>
</feature>
<feature type="modified residue" description="Phosphoserine" evidence="2">
    <location>
        <position position="815"/>
    </location>
</feature>
<feature type="splice variant" id="VSP_009173" description="In isoform 2." evidence="6">
    <original>ESVANTLGARV</original>
    <variation>VRAQ</variation>
    <location>
        <begin position="821"/>
        <end position="831"/>
    </location>
</feature>
<feature type="sequence conflict" description="In Ref. 1; AAK29420/AAK29421." evidence="7" ref="1">
    <original>S</original>
    <variation>P</variation>
    <location>
        <position position="27"/>
    </location>
</feature>
<feature type="sequence conflict" description="In Ref. 4; BAB23185." evidence="7" ref="4">
    <original>T</original>
    <variation>S</variation>
    <location>
        <position position="397"/>
    </location>
</feature>
<feature type="sequence conflict" description="In Ref. 1; AAG24918." evidence="7" ref="1">
    <original>L</original>
    <variation>P</variation>
    <location>
        <position position="435"/>
    </location>
</feature>
<feature type="sequence conflict" description="In Ref. 1; AAG24918." evidence="7" ref="1">
    <original>E</original>
    <variation>G</variation>
    <location>
        <position position="714"/>
    </location>
</feature>
<comment type="function">
    <text evidence="3">Zinc phosphodiesterase, which displays mitochondrial tRNA 3'-processing endonuclease activity. Involved in tRNA maturation, by removing a 3'-trailer from precursor tRNA. Associates with mitochondrial DNA complexes at the nucleoids to initiate RNA processing and ribosome assembly.</text>
</comment>
<comment type="catalytic activity">
    <reaction evidence="3">
        <text>Endonucleolytic cleavage of RNA, removing extra 3' nucleotides from tRNA precursor, generating 3' termini of tRNAs. A 3'-hydroxy group is left at the tRNA terminus and a 5'-phosphoryl group is left at the trailer molecule.</text>
        <dbReference type="EC" id="3.1.26.11"/>
    </reaction>
</comment>
<comment type="cofactor">
    <cofactor evidence="7">
        <name>Zn(2+)</name>
        <dbReference type="ChEBI" id="CHEBI:29105"/>
    </cofactor>
</comment>
<comment type="subunit">
    <text evidence="1">Homodimer. Interacts with PTCD1.</text>
</comment>
<comment type="subcellular location">
    <subcellularLocation>
        <location evidence="3">Mitochondrion</location>
    </subcellularLocation>
    <subcellularLocation>
        <location evidence="3">Mitochondrion matrix</location>
        <location evidence="3">Mitochondrion nucleoid</location>
    </subcellularLocation>
    <subcellularLocation>
        <location evidence="3">Nucleus</location>
    </subcellularLocation>
    <text evidence="3">Mainly mitochondrial.</text>
</comment>
<comment type="alternative products">
    <event type="alternative splicing"/>
    <isoform>
        <id>Q80Y81-1</id>
        <name>1</name>
        <sequence type="displayed"/>
    </isoform>
    <isoform>
        <id>Q80Y81-2</id>
        <name>2</name>
        <sequence type="described" ref="VSP_009173"/>
    </isoform>
</comment>
<comment type="similarity">
    <text evidence="7">Belongs to the RNase Z family.</text>
</comment>
<protein>
    <recommendedName>
        <fullName>Zinc phosphodiesterase ELAC protein 2</fullName>
        <ecNumber>3.1.26.11</ecNumber>
    </recommendedName>
    <alternativeName>
        <fullName>ElaC homolog protein 2</fullName>
    </alternativeName>
    <alternativeName>
        <fullName>Ribonuclease Z 2</fullName>
        <shortName>RNase Z 2</shortName>
    </alternativeName>
    <alternativeName>
        <fullName>tRNA 3 endonuclease 2</fullName>
    </alternativeName>
    <alternativeName>
        <fullName>tRNase Z 2</fullName>
    </alternativeName>
</protein>
<accession>Q80Y81</accession>
<accession>B1ATP6</accession>
<accession>Q99MF0</accession>
<accession>Q99MF1</accession>
<accession>Q9CTA2</accession>
<accession>Q9D1A8</accession>
<accession>Q9EPZ2</accession>
<sequence length="831" mass="92719">MWALRSLLRPLGLRTMSQGSARRPRPSKDPLRHLRTREKRGPGPGGPNTVYLQVVAAGGRDAGAALYVFSEYNRYLFNCGEGVQRLMQEHKLKVARLDNIFLTRMHWSNVGGLCGMILTLKETGLPKCVLSGPPQLEKYLEAIKIFSGPLKGIELAVRPHSAPEYKDETMTVYQVPIHSERRCGKQQPSQSPRTSPNRLSPKQSSDSGSAENGQCPPEDSSAGANRKAWGRDPSLVVAFVCKLHLRKGNFLVLKAKELGLPVGTAAIAPIIAAVKDGKSITYEGREIAAEELCTPPDPGLVFIVVECPDEGFILPICENDTFKRYQAEADAPVALVVHIAPESVLIDSRYQQWMERFGPDTQHLILNENCPSVHNLRSHKIQTQLSLIHPDIFPQLTSFYSKEEGSTLSVPTVRGECLLKYQLRPKREWQRDTTLDCNTDEFIAEALELPSFQESVEEYRKNVQENPAPAEKRSQYPEIVFLGTGSAIPMKIRNVSSTLVNLSPDKSVLLDCGEGTFGQLCRHYGQQIDRVLCSLTAVFVSHLHADHHTGLLNILLQREHALASLGKPFQPLLVVAPTQLRAWLQQYHNHCQEILHHVSMIPAKCLQKGAEVSNTTLERLISLLLETCDLEEFQTCLVRHCKHAFGCALVHSSGWKVVYSGDTMPCEALVQMGKDATLLIHEATLEDGLEEEAVEKTHSTTSQAINVGMRMNAEFIMLNHFSQRYAKIPLFSPDFNEKVGIAFDHMKVCFGDFPTVPKLIPPLKALFAGDIEEMVERREKRELRLVRAALLTQQADSPEDREPQQKRAHTDEPHSPQSKKESVANTLGARV</sequence>
<gene>
    <name type="primary">Elac2</name>
</gene>
<name>RNZ2_MOUSE</name>
<organism>
    <name type="scientific">Mus musculus</name>
    <name type="common">Mouse</name>
    <dbReference type="NCBI Taxonomy" id="10090"/>
    <lineage>
        <taxon>Eukaryota</taxon>
        <taxon>Metazoa</taxon>
        <taxon>Chordata</taxon>
        <taxon>Craniata</taxon>
        <taxon>Vertebrata</taxon>
        <taxon>Euteleostomi</taxon>
        <taxon>Mammalia</taxon>
        <taxon>Eutheria</taxon>
        <taxon>Euarchontoglires</taxon>
        <taxon>Glires</taxon>
        <taxon>Rodentia</taxon>
        <taxon>Myomorpha</taxon>
        <taxon>Muroidea</taxon>
        <taxon>Muridae</taxon>
        <taxon>Murinae</taxon>
        <taxon>Mus</taxon>
        <taxon>Mus</taxon>
    </lineage>
</organism>
<reference key="1">
    <citation type="journal article" date="2001" name="Nat. Genet.">
        <title>A candidate prostate cancer susceptibility gene at chromosome 17p.</title>
        <authorList>
            <person name="Tavtigian S.V."/>
            <person name="Simard J."/>
            <person name="Teng D.H.F."/>
            <person name="Abtin V."/>
            <person name="Baumgard M."/>
            <person name="Beck A."/>
            <person name="Camp N.J."/>
            <person name="Carillo A.R."/>
            <person name="Chen Y."/>
            <person name="Dayananth P."/>
            <person name="Desrochers M."/>
            <person name="Dumont M."/>
            <person name="Farnham J.M."/>
            <person name="Frank D."/>
            <person name="Frye C."/>
            <person name="Ghaffari S."/>
            <person name="Gupte J.S."/>
            <person name="Hu R."/>
            <person name="Iliev D."/>
            <person name="Janecki T."/>
            <person name="Kort E.N."/>
            <person name="Laity K.E."/>
            <person name="Leavitt A."/>
            <person name="Leblanc G."/>
            <person name="McArthur-Morrison J."/>
            <person name="Pederson A."/>
            <person name="Penn B."/>
            <person name="Peterson K.T."/>
            <person name="Reid J.E."/>
            <person name="Richards S."/>
            <person name="Schroeder M."/>
            <person name="Smith R."/>
            <person name="Snyder S.C."/>
            <person name="Swedlund B."/>
            <person name="Swensen J."/>
            <person name="Thomas A."/>
            <person name="Tranchant M."/>
            <person name="Woodland A.-M."/>
            <person name="Labrie F."/>
            <person name="Skolnick M.H."/>
            <person name="Neuhausen S."/>
            <person name="Rommens J."/>
            <person name="Cannon-Albright L.A."/>
        </authorList>
    </citation>
    <scope>NUCLEOTIDE SEQUENCE [MRNA] (ISOFORM 1)</scope>
</reference>
<reference key="2">
    <citation type="journal article" date="2009" name="PLoS Biol.">
        <title>Lineage-specific biology revealed by a finished genome assembly of the mouse.</title>
        <authorList>
            <person name="Church D.M."/>
            <person name="Goodstadt L."/>
            <person name="Hillier L.W."/>
            <person name="Zody M.C."/>
            <person name="Goldstein S."/>
            <person name="She X."/>
            <person name="Bult C.J."/>
            <person name="Agarwala R."/>
            <person name="Cherry J.L."/>
            <person name="DiCuccio M."/>
            <person name="Hlavina W."/>
            <person name="Kapustin Y."/>
            <person name="Meric P."/>
            <person name="Maglott D."/>
            <person name="Birtle Z."/>
            <person name="Marques A.C."/>
            <person name="Graves T."/>
            <person name="Zhou S."/>
            <person name="Teague B."/>
            <person name="Potamousis K."/>
            <person name="Churas C."/>
            <person name="Place M."/>
            <person name="Herschleb J."/>
            <person name="Runnheim R."/>
            <person name="Forrest D."/>
            <person name="Amos-Landgraf J."/>
            <person name="Schwartz D.C."/>
            <person name="Cheng Z."/>
            <person name="Lindblad-Toh K."/>
            <person name="Eichler E.E."/>
            <person name="Ponting C.P."/>
        </authorList>
    </citation>
    <scope>NUCLEOTIDE SEQUENCE [LARGE SCALE GENOMIC DNA]</scope>
    <source>
        <strain>C57BL/6J</strain>
    </source>
</reference>
<reference key="3">
    <citation type="journal article" date="2004" name="Genome Res.">
        <title>The status, quality, and expansion of the NIH full-length cDNA project: the Mammalian Gene Collection (MGC).</title>
        <authorList>
            <consortium name="The MGC Project Team"/>
        </authorList>
    </citation>
    <scope>NUCLEOTIDE SEQUENCE [LARGE SCALE MRNA] (ISOFORM 1)</scope>
    <source>
        <tissue>Eye</tissue>
    </source>
</reference>
<reference key="4">
    <citation type="journal article" date="2005" name="Science">
        <title>The transcriptional landscape of the mammalian genome.</title>
        <authorList>
            <person name="Carninci P."/>
            <person name="Kasukawa T."/>
            <person name="Katayama S."/>
            <person name="Gough J."/>
            <person name="Frith M.C."/>
            <person name="Maeda N."/>
            <person name="Oyama R."/>
            <person name="Ravasi T."/>
            <person name="Lenhard B."/>
            <person name="Wells C."/>
            <person name="Kodzius R."/>
            <person name="Shimokawa K."/>
            <person name="Bajic V.B."/>
            <person name="Brenner S.E."/>
            <person name="Batalov S."/>
            <person name="Forrest A.R."/>
            <person name="Zavolan M."/>
            <person name="Davis M.J."/>
            <person name="Wilming L.G."/>
            <person name="Aidinis V."/>
            <person name="Allen J.E."/>
            <person name="Ambesi-Impiombato A."/>
            <person name="Apweiler R."/>
            <person name="Aturaliya R.N."/>
            <person name="Bailey T.L."/>
            <person name="Bansal M."/>
            <person name="Baxter L."/>
            <person name="Beisel K.W."/>
            <person name="Bersano T."/>
            <person name="Bono H."/>
            <person name="Chalk A.M."/>
            <person name="Chiu K.P."/>
            <person name="Choudhary V."/>
            <person name="Christoffels A."/>
            <person name="Clutterbuck D.R."/>
            <person name="Crowe M.L."/>
            <person name="Dalla E."/>
            <person name="Dalrymple B.P."/>
            <person name="de Bono B."/>
            <person name="Della Gatta G."/>
            <person name="di Bernardo D."/>
            <person name="Down T."/>
            <person name="Engstrom P."/>
            <person name="Fagiolini M."/>
            <person name="Faulkner G."/>
            <person name="Fletcher C.F."/>
            <person name="Fukushima T."/>
            <person name="Furuno M."/>
            <person name="Futaki S."/>
            <person name="Gariboldi M."/>
            <person name="Georgii-Hemming P."/>
            <person name="Gingeras T.R."/>
            <person name="Gojobori T."/>
            <person name="Green R.E."/>
            <person name="Gustincich S."/>
            <person name="Harbers M."/>
            <person name="Hayashi Y."/>
            <person name="Hensch T.K."/>
            <person name="Hirokawa N."/>
            <person name="Hill D."/>
            <person name="Huminiecki L."/>
            <person name="Iacono M."/>
            <person name="Ikeo K."/>
            <person name="Iwama A."/>
            <person name="Ishikawa T."/>
            <person name="Jakt M."/>
            <person name="Kanapin A."/>
            <person name="Katoh M."/>
            <person name="Kawasawa Y."/>
            <person name="Kelso J."/>
            <person name="Kitamura H."/>
            <person name="Kitano H."/>
            <person name="Kollias G."/>
            <person name="Krishnan S.P."/>
            <person name="Kruger A."/>
            <person name="Kummerfeld S.K."/>
            <person name="Kurochkin I.V."/>
            <person name="Lareau L.F."/>
            <person name="Lazarevic D."/>
            <person name="Lipovich L."/>
            <person name="Liu J."/>
            <person name="Liuni S."/>
            <person name="McWilliam S."/>
            <person name="Madan Babu M."/>
            <person name="Madera M."/>
            <person name="Marchionni L."/>
            <person name="Matsuda H."/>
            <person name="Matsuzawa S."/>
            <person name="Miki H."/>
            <person name="Mignone F."/>
            <person name="Miyake S."/>
            <person name="Morris K."/>
            <person name="Mottagui-Tabar S."/>
            <person name="Mulder N."/>
            <person name="Nakano N."/>
            <person name="Nakauchi H."/>
            <person name="Ng P."/>
            <person name="Nilsson R."/>
            <person name="Nishiguchi S."/>
            <person name="Nishikawa S."/>
            <person name="Nori F."/>
            <person name="Ohara O."/>
            <person name="Okazaki Y."/>
            <person name="Orlando V."/>
            <person name="Pang K.C."/>
            <person name="Pavan W.J."/>
            <person name="Pavesi G."/>
            <person name="Pesole G."/>
            <person name="Petrovsky N."/>
            <person name="Piazza S."/>
            <person name="Reed J."/>
            <person name="Reid J.F."/>
            <person name="Ring B.Z."/>
            <person name="Ringwald M."/>
            <person name="Rost B."/>
            <person name="Ruan Y."/>
            <person name="Salzberg S.L."/>
            <person name="Sandelin A."/>
            <person name="Schneider C."/>
            <person name="Schoenbach C."/>
            <person name="Sekiguchi K."/>
            <person name="Semple C.A."/>
            <person name="Seno S."/>
            <person name="Sessa L."/>
            <person name="Sheng Y."/>
            <person name="Shibata Y."/>
            <person name="Shimada H."/>
            <person name="Shimada K."/>
            <person name="Silva D."/>
            <person name="Sinclair B."/>
            <person name="Sperling S."/>
            <person name="Stupka E."/>
            <person name="Sugiura K."/>
            <person name="Sultana R."/>
            <person name="Takenaka Y."/>
            <person name="Taki K."/>
            <person name="Tammoja K."/>
            <person name="Tan S.L."/>
            <person name="Tang S."/>
            <person name="Taylor M.S."/>
            <person name="Tegner J."/>
            <person name="Teichmann S.A."/>
            <person name="Ueda H.R."/>
            <person name="van Nimwegen E."/>
            <person name="Verardo R."/>
            <person name="Wei C.L."/>
            <person name="Yagi K."/>
            <person name="Yamanishi H."/>
            <person name="Zabarovsky E."/>
            <person name="Zhu S."/>
            <person name="Zimmer A."/>
            <person name="Hide W."/>
            <person name="Bult C."/>
            <person name="Grimmond S.M."/>
            <person name="Teasdale R.D."/>
            <person name="Liu E.T."/>
            <person name="Brusic V."/>
            <person name="Quackenbush J."/>
            <person name="Wahlestedt C."/>
            <person name="Mattick J.S."/>
            <person name="Hume D.A."/>
            <person name="Kai C."/>
            <person name="Sasaki D."/>
            <person name="Tomaru Y."/>
            <person name="Fukuda S."/>
            <person name="Kanamori-Katayama M."/>
            <person name="Suzuki M."/>
            <person name="Aoki J."/>
            <person name="Arakawa T."/>
            <person name="Iida J."/>
            <person name="Imamura K."/>
            <person name="Itoh M."/>
            <person name="Kato T."/>
            <person name="Kawaji H."/>
            <person name="Kawagashira N."/>
            <person name="Kawashima T."/>
            <person name="Kojima M."/>
            <person name="Kondo S."/>
            <person name="Konno H."/>
            <person name="Nakano K."/>
            <person name="Ninomiya N."/>
            <person name="Nishio T."/>
            <person name="Okada M."/>
            <person name="Plessy C."/>
            <person name="Shibata K."/>
            <person name="Shiraki T."/>
            <person name="Suzuki S."/>
            <person name="Tagami M."/>
            <person name="Waki K."/>
            <person name="Watahiki A."/>
            <person name="Okamura-Oho Y."/>
            <person name="Suzuki H."/>
            <person name="Kawai J."/>
            <person name="Hayashizaki Y."/>
        </authorList>
    </citation>
    <scope>NUCLEOTIDE SEQUENCE [LARGE SCALE MRNA] OF 397-831 (ISOFORM 1)</scope>
    <scope>NUCLEOTIDE SEQUENCE [LARGE SCALE MRNA] OF 581-831 (ISOFORM 2)</scope>
    <source>
        <strain>C57BL/6J</strain>
        <tissue>Embryo</tissue>
    </source>
</reference>
<reference key="5">
    <citation type="journal article" date="2007" name="Proc. Natl. Acad. Sci. U.S.A.">
        <title>Large-scale phosphorylation analysis of mouse liver.</title>
        <authorList>
            <person name="Villen J."/>
            <person name="Beausoleil S.A."/>
            <person name="Gerber S.A."/>
            <person name="Gygi S.P."/>
        </authorList>
    </citation>
    <scope>PHOSPHORYLATION [LARGE SCALE ANALYSIS] AT SER-797</scope>
    <scope>IDENTIFICATION BY MASS SPECTROMETRY [LARGE SCALE ANALYSIS]</scope>
    <source>
        <tissue>Liver</tissue>
    </source>
</reference>
<reference key="6">
    <citation type="journal article" date="2007" name="Science">
        <title>ATM and ATR substrate analysis reveals extensive protein networks responsive to DNA damage.</title>
        <authorList>
            <person name="Matsuoka S."/>
            <person name="Ballif B.A."/>
            <person name="Smogorzewska A."/>
            <person name="McDonald E.R. III"/>
            <person name="Hurov K.E."/>
            <person name="Luo J."/>
            <person name="Bakalarski C.E."/>
            <person name="Zhao Z."/>
            <person name="Solimini N."/>
            <person name="Lerenthal Y."/>
            <person name="Shiloh Y."/>
            <person name="Gygi S.P."/>
            <person name="Elledge S.J."/>
        </authorList>
    </citation>
    <scope>PHOSPHORYLATION [LARGE SCALE ANALYSIS] AT THR-792</scope>
    <scope>IDENTIFICATION BY MASS SPECTROMETRY [LARGE SCALE ANALYSIS]</scope>
    <source>
        <tissue>Embryonic fibroblast</tissue>
    </source>
</reference>
<reference key="7">
    <citation type="journal article" date="2009" name="Mol. Cell. Proteomics">
        <title>Large scale localization of protein phosphorylation by use of electron capture dissociation mass spectrometry.</title>
        <authorList>
            <person name="Sweet S.M."/>
            <person name="Bailey C.M."/>
            <person name="Cunningham D.L."/>
            <person name="Heath J.K."/>
            <person name="Cooper H.J."/>
        </authorList>
    </citation>
    <scope>PHOSPHORYLATION [LARGE SCALE ANALYSIS] AT SER-191; SER-195 AND SER-200</scope>
    <scope>IDENTIFICATION BY MASS SPECTROMETRY [LARGE SCALE ANALYSIS]</scope>
    <source>
        <tissue>Embryonic fibroblast</tissue>
    </source>
</reference>
<reference key="8">
    <citation type="journal article" date="2010" name="Cell">
        <title>A tissue-specific atlas of mouse protein phosphorylation and expression.</title>
        <authorList>
            <person name="Huttlin E.L."/>
            <person name="Jedrychowski M.P."/>
            <person name="Elias J.E."/>
            <person name="Goswami T."/>
            <person name="Rad R."/>
            <person name="Beausoleil S.A."/>
            <person name="Villen J."/>
            <person name="Haas W."/>
            <person name="Sowa M.E."/>
            <person name="Gygi S.P."/>
        </authorList>
    </citation>
    <scope>PHOSPHORYLATION [LARGE SCALE ANALYSIS] AT SER-797</scope>
    <scope>IDENTIFICATION BY MASS SPECTROMETRY [LARGE SCALE ANALYSIS]</scope>
    <source>
        <tissue>Brain</tissue>
        <tissue>Brown adipose tissue</tissue>
        <tissue>Heart</tissue>
        <tissue>Kidney</tissue>
        <tissue>Liver</tissue>
        <tissue>Lung</tissue>
        <tissue>Pancreas</tissue>
        <tissue>Spleen</tissue>
        <tissue>Testis</tissue>
    </source>
</reference>
<dbReference type="EC" id="3.1.26.11"/>
<dbReference type="EMBL" id="AF308696">
    <property type="protein sequence ID" value="AAG24918.2"/>
    <property type="molecule type" value="mRNA"/>
</dbReference>
<dbReference type="EMBL" id="AF348157">
    <property type="protein sequence ID" value="AAK29420.1"/>
    <property type="molecule type" value="Genomic_DNA"/>
</dbReference>
<dbReference type="EMBL" id="AF348157">
    <property type="protein sequence ID" value="AAK29421.1"/>
    <property type="molecule type" value="Genomic_DNA"/>
</dbReference>
<dbReference type="EMBL" id="AL663045">
    <property type="status" value="NOT_ANNOTATED_CDS"/>
    <property type="molecule type" value="Genomic_DNA"/>
</dbReference>
<dbReference type="EMBL" id="BC048235">
    <property type="protein sequence ID" value="AAH48235.1"/>
    <property type="molecule type" value="mRNA"/>
</dbReference>
<dbReference type="EMBL" id="AK003759">
    <property type="protein sequence ID" value="BAB22981.2"/>
    <property type="molecule type" value="mRNA"/>
</dbReference>
<dbReference type="EMBL" id="AK004136">
    <property type="protein sequence ID" value="BAB23185.1"/>
    <property type="molecule type" value="mRNA"/>
</dbReference>
<dbReference type="CCDS" id="CCDS24841.1">
    <molecule id="Q80Y81-1"/>
</dbReference>
<dbReference type="CCDS" id="CCDS88171.1">
    <molecule id="Q80Y81-2"/>
</dbReference>
<dbReference type="RefSeq" id="NP_001349912.1">
    <molecule id="Q80Y81-2"/>
    <property type="nucleotide sequence ID" value="NM_001362983.1"/>
</dbReference>
<dbReference type="RefSeq" id="NP_075968.2">
    <molecule id="Q80Y81-1"/>
    <property type="nucleotide sequence ID" value="NM_023479.3"/>
</dbReference>
<dbReference type="SMR" id="Q80Y81"/>
<dbReference type="BioGRID" id="212960">
    <property type="interactions" value="12"/>
</dbReference>
<dbReference type="FunCoup" id="Q80Y81">
    <property type="interactions" value="3773"/>
</dbReference>
<dbReference type="STRING" id="10090.ENSMUSP00000071788"/>
<dbReference type="GlyGen" id="Q80Y81">
    <property type="glycosylation" value="1 site, 1 N-linked glycan (1 site)"/>
</dbReference>
<dbReference type="iPTMnet" id="Q80Y81"/>
<dbReference type="PhosphoSitePlus" id="Q80Y81"/>
<dbReference type="SwissPalm" id="Q80Y81"/>
<dbReference type="PaxDb" id="10090-ENSMUSP00000071788"/>
<dbReference type="ProteomicsDB" id="300462">
    <molecule id="Q80Y81-1"/>
</dbReference>
<dbReference type="ProteomicsDB" id="300463">
    <molecule id="Q80Y81-2"/>
</dbReference>
<dbReference type="Pumba" id="Q80Y81"/>
<dbReference type="Antibodypedia" id="13065">
    <property type="antibodies" value="203 antibodies from 30 providers"/>
</dbReference>
<dbReference type="DNASU" id="68626"/>
<dbReference type="Ensembl" id="ENSMUST00000071891.12">
    <molecule id="Q80Y81-1"/>
    <property type="protein sequence ID" value="ENSMUSP00000071788.6"/>
    <property type="gene ID" value="ENSMUSG00000020549.15"/>
</dbReference>
<dbReference type="Ensembl" id="ENSMUST00000101049.9">
    <molecule id="Q80Y81-2"/>
    <property type="protein sequence ID" value="ENSMUSP00000098610.3"/>
    <property type="gene ID" value="ENSMUSG00000020549.15"/>
</dbReference>
<dbReference type="GeneID" id="68626"/>
<dbReference type="KEGG" id="mmu:68626"/>
<dbReference type="UCSC" id="uc007jks.2">
    <molecule id="Q80Y81-1"/>
    <property type="organism name" value="mouse"/>
</dbReference>
<dbReference type="AGR" id="MGI:1890496"/>
<dbReference type="CTD" id="60528"/>
<dbReference type="MGI" id="MGI:1890496">
    <property type="gene designation" value="Elac2"/>
</dbReference>
<dbReference type="VEuPathDB" id="HostDB:ENSMUSG00000020549"/>
<dbReference type="eggNOG" id="KOG2121">
    <property type="taxonomic scope" value="Eukaryota"/>
</dbReference>
<dbReference type="GeneTree" id="ENSGT00730000111191"/>
<dbReference type="InParanoid" id="Q80Y81"/>
<dbReference type="OMA" id="INYICQL"/>
<dbReference type="OrthoDB" id="527344at2759"/>
<dbReference type="PhylomeDB" id="Q80Y81"/>
<dbReference type="TreeFam" id="TF105797"/>
<dbReference type="BRENDA" id="3.1.26.11">
    <property type="organism ID" value="3474"/>
</dbReference>
<dbReference type="BioGRID-ORCS" id="68626">
    <property type="hits" value="26 hits in 79 CRISPR screens"/>
</dbReference>
<dbReference type="PRO" id="PR:Q80Y81"/>
<dbReference type="Proteomes" id="UP000000589">
    <property type="component" value="Chromosome 11"/>
</dbReference>
<dbReference type="RNAct" id="Q80Y81">
    <property type="molecule type" value="protein"/>
</dbReference>
<dbReference type="Bgee" id="ENSMUSG00000020549">
    <property type="expression patterns" value="Expressed in otic placode and 259 other cell types or tissues"/>
</dbReference>
<dbReference type="ExpressionAtlas" id="Q80Y81">
    <property type="expression patterns" value="baseline and differential"/>
</dbReference>
<dbReference type="GO" id="GO:0042645">
    <property type="term" value="C:mitochondrial nucleoid"/>
    <property type="evidence" value="ECO:0000314"/>
    <property type="project" value="MGI"/>
</dbReference>
<dbReference type="GO" id="GO:0005739">
    <property type="term" value="C:mitochondrion"/>
    <property type="evidence" value="ECO:0007005"/>
    <property type="project" value="MGI"/>
</dbReference>
<dbReference type="GO" id="GO:0005654">
    <property type="term" value="C:nucleoplasm"/>
    <property type="evidence" value="ECO:0007669"/>
    <property type="project" value="Ensembl"/>
</dbReference>
<dbReference type="GO" id="GO:0005634">
    <property type="term" value="C:nucleus"/>
    <property type="evidence" value="ECO:0000250"/>
    <property type="project" value="UniProtKB"/>
</dbReference>
<dbReference type="GO" id="GO:0042781">
    <property type="term" value="F:3'-tRNA processing endoribonuclease activity"/>
    <property type="evidence" value="ECO:0007669"/>
    <property type="project" value="UniProtKB-EC"/>
</dbReference>
<dbReference type="GO" id="GO:0046872">
    <property type="term" value="F:metal ion binding"/>
    <property type="evidence" value="ECO:0007669"/>
    <property type="project" value="UniProtKB-KW"/>
</dbReference>
<dbReference type="GO" id="GO:1990180">
    <property type="term" value="P:mitochondrial tRNA 3'-end processing"/>
    <property type="evidence" value="ECO:0000250"/>
    <property type="project" value="UniProtKB"/>
</dbReference>
<dbReference type="CDD" id="cd07718">
    <property type="entry name" value="RNaseZ_ELAC1_ELAC2-C-term-like_MBL-fold"/>
    <property type="match status" value="1"/>
</dbReference>
<dbReference type="CDD" id="cd16296">
    <property type="entry name" value="RNaseZ_ELAC2-N-term-like_MBL-fold"/>
    <property type="match status" value="1"/>
</dbReference>
<dbReference type="FunFam" id="3.60.15.10:FF:000014">
    <property type="entry name" value="Zinc phosphodiesterase ELAC protein 2"/>
    <property type="match status" value="1"/>
</dbReference>
<dbReference type="Gene3D" id="3.60.15.10">
    <property type="entry name" value="Ribonuclease Z/Hydroxyacylglutathione hydrolase-like"/>
    <property type="match status" value="2"/>
</dbReference>
<dbReference type="InterPro" id="IPR001279">
    <property type="entry name" value="Metallo-B-lactamas"/>
</dbReference>
<dbReference type="InterPro" id="IPR036866">
    <property type="entry name" value="RibonucZ/Hydroxyglut_hydro"/>
</dbReference>
<dbReference type="InterPro" id="IPR047151">
    <property type="entry name" value="RNZ2-like"/>
</dbReference>
<dbReference type="InterPro" id="IPR027794">
    <property type="entry name" value="tRNase_Z_dom"/>
</dbReference>
<dbReference type="PANTHER" id="PTHR12553">
    <property type="entry name" value="ZINC PHOSPHODIESTERASE ELAC PROTEIN 2"/>
    <property type="match status" value="1"/>
</dbReference>
<dbReference type="PANTHER" id="PTHR12553:SF49">
    <property type="entry name" value="ZINC PHOSPHODIESTERASE ELAC PROTEIN 2"/>
    <property type="match status" value="1"/>
</dbReference>
<dbReference type="Pfam" id="PF12706">
    <property type="entry name" value="Lactamase_B_2"/>
    <property type="match status" value="1"/>
</dbReference>
<dbReference type="Pfam" id="PF13691">
    <property type="entry name" value="Lactamase_B_4"/>
    <property type="match status" value="1"/>
</dbReference>
<dbReference type="SUPFAM" id="SSF56281">
    <property type="entry name" value="Metallo-hydrolase/oxidoreductase"/>
    <property type="match status" value="2"/>
</dbReference>